<accession>Q55EI3</accession>
<keyword id="KW-0445">Lipid transport</keyword>
<keyword id="KW-0472">Membrane</keyword>
<keyword id="KW-1185">Reference proteome</keyword>
<keyword id="KW-0813">Transport</keyword>
<evidence type="ECO:0000250" key="1">
    <source>
        <dbReference type="UniProtKB" id="Q07878"/>
    </source>
</evidence>
<evidence type="ECO:0000255" key="2"/>
<evidence type="ECO:0000256" key="3">
    <source>
        <dbReference type="SAM" id="MobiDB-lite"/>
    </source>
</evidence>
<evidence type="ECO:0000305" key="4"/>
<name>VP13E_DICDI</name>
<dbReference type="EMBL" id="AAFI02000004">
    <property type="protein sequence ID" value="EAL73032.1"/>
    <property type="molecule type" value="Genomic_DNA"/>
</dbReference>
<dbReference type="RefSeq" id="XP_647037.1">
    <property type="nucleotide sequence ID" value="XM_641945.1"/>
</dbReference>
<dbReference type="PaxDb" id="44689-DDB0234203"/>
<dbReference type="EnsemblProtists" id="EAL73032">
    <property type="protein sequence ID" value="EAL73032"/>
    <property type="gene ID" value="DDB_G0268886"/>
</dbReference>
<dbReference type="GeneID" id="8616732"/>
<dbReference type="KEGG" id="ddi:DDB_G0268886"/>
<dbReference type="dictyBase" id="DDB_G0268886">
    <property type="gene designation" value="vps13E"/>
</dbReference>
<dbReference type="VEuPathDB" id="AmoebaDB:DDB_G0268886"/>
<dbReference type="eggNOG" id="KOG1809">
    <property type="taxonomic scope" value="Eukaryota"/>
</dbReference>
<dbReference type="HOGENOM" id="CLU_223861_0_0_1"/>
<dbReference type="InParanoid" id="Q55EI3"/>
<dbReference type="OMA" id="YGKKMYF"/>
<dbReference type="PRO" id="PR:Q55EI3"/>
<dbReference type="Proteomes" id="UP000002195">
    <property type="component" value="Chromosome 1"/>
</dbReference>
<dbReference type="GO" id="GO:0016020">
    <property type="term" value="C:membrane"/>
    <property type="evidence" value="ECO:0007669"/>
    <property type="project" value="UniProtKB-SubCell"/>
</dbReference>
<dbReference type="GO" id="GO:0006869">
    <property type="term" value="P:lipid transport"/>
    <property type="evidence" value="ECO:0007669"/>
    <property type="project" value="UniProtKB-KW"/>
</dbReference>
<dbReference type="GO" id="GO:0045053">
    <property type="term" value="P:protein retention in Golgi apparatus"/>
    <property type="evidence" value="ECO:0000318"/>
    <property type="project" value="GO_Central"/>
</dbReference>
<dbReference type="GO" id="GO:0006623">
    <property type="term" value="P:protein targeting to vacuole"/>
    <property type="evidence" value="ECO:0000318"/>
    <property type="project" value="GO_Central"/>
</dbReference>
<dbReference type="InterPro" id="IPR026847">
    <property type="entry name" value="VPS13"/>
</dbReference>
<dbReference type="InterPro" id="IPR056748">
    <property type="entry name" value="VPS13-like_C"/>
</dbReference>
<dbReference type="InterPro" id="IPR056747">
    <property type="entry name" value="VPS13-like_M"/>
</dbReference>
<dbReference type="InterPro" id="IPR026854">
    <property type="entry name" value="VPS13_N"/>
</dbReference>
<dbReference type="InterPro" id="IPR009543">
    <property type="entry name" value="VPS13_VAB"/>
</dbReference>
<dbReference type="PANTHER" id="PTHR16166:SF111">
    <property type="entry name" value="INTERMEMBRANE LIPID TRANSFER PROTEIN VPS13E"/>
    <property type="match status" value="1"/>
</dbReference>
<dbReference type="PANTHER" id="PTHR16166">
    <property type="entry name" value="VACUOLAR PROTEIN SORTING-ASSOCIATED PROTEIN VPS13"/>
    <property type="match status" value="1"/>
</dbReference>
<dbReference type="Pfam" id="PF25037">
    <property type="entry name" value="VPS13_C"/>
    <property type="match status" value="1"/>
</dbReference>
<dbReference type="Pfam" id="PF25033">
    <property type="entry name" value="VPS13_M"/>
    <property type="match status" value="1"/>
</dbReference>
<dbReference type="Pfam" id="PF12624">
    <property type="entry name" value="VPS13_N"/>
    <property type="match status" value="1"/>
</dbReference>
<dbReference type="Pfam" id="PF25036">
    <property type="entry name" value="VPS13_VAB"/>
    <property type="match status" value="1"/>
</dbReference>
<organism>
    <name type="scientific">Dictyostelium discoideum</name>
    <name type="common">Social amoeba</name>
    <dbReference type="NCBI Taxonomy" id="44689"/>
    <lineage>
        <taxon>Eukaryota</taxon>
        <taxon>Amoebozoa</taxon>
        <taxon>Evosea</taxon>
        <taxon>Eumycetozoa</taxon>
        <taxon>Dictyostelia</taxon>
        <taxon>Dictyosteliales</taxon>
        <taxon>Dictyosteliaceae</taxon>
        <taxon>Dictyostelium</taxon>
    </lineage>
</organism>
<reference key="1">
    <citation type="journal article" date="2005" name="Nature">
        <title>The genome of the social amoeba Dictyostelium discoideum.</title>
        <authorList>
            <person name="Eichinger L."/>
            <person name="Pachebat J.A."/>
            <person name="Gloeckner G."/>
            <person name="Rajandream M.A."/>
            <person name="Sucgang R."/>
            <person name="Berriman M."/>
            <person name="Song J."/>
            <person name="Olsen R."/>
            <person name="Szafranski K."/>
            <person name="Xu Q."/>
            <person name="Tunggal B."/>
            <person name="Kummerfeld S."/>
            <person name="Madera M."/>
            <person name="Konfortov B.A."/>
            <person name="Rivero F."/>
            <person name="Bankier A.T."/>
            <person name="Lehmann R."/>
            <person name="Hamlin N."/>
            <person name="Davies R."/>
            <person name="Gaudet P."/>
            <person name="Fey P."/>
            <person name="Pilcher K."/>
            <person name="Chen G."/>
            <person name="Saunders D."/>
            <person name="Sodergren E.J."/>
            <person name="Davis P."/>
            <person name="Kerhornou A."/>
            <person name="Nie X."/>
            <person name="Hall N."/>
            <person name="Anjard C."/>
            <person name="Hemphill L."/>
            <person name="Bason N."/>
            <person name="Farbrother P."/>
            <person name="Desany B."/>
            <person name="Just E."/>
            <person name="Morio T."/>
            <person name="Rost R."/>
            <person name="Churcher C.M."/>
            <person name="Cooper J."/>
            <person name="Haydock S."/>
            <person name="van Driessche N."/>
            <person name="Cronin A."/>
            <person name="Goodhead I."/>
            <person name="Muzny D.M."/>
            <person name="Mourier T."/>
            <person name="Pain A."/>
            <person name="Lu M."/>
            <person name="Harper D."/>
            <person name="Lindsay R."/>
            <person name="Hauser H."/>
            <person name="James K.D."/>
            <person name="Quiles M."/>
            <person name="Madan Babu M."/>
            <person name="Saito T."/>
            <person name="Buchrieser C."/>
            <person name="Wardroper A."/>
            <person name="Felder M."/>
            <person name="Thangavelu M."/>
            <person name="Johnson D."/>
            <person name="Knights A."/>
            <person name="Loulseged H."/>
            <person name="Mungall K.L."/>
            <person name="Oliver K."/>
            <person name="Price C."/>
            <person name="Quail M.A."/>
            <person name="Urushihara H."/>
            <person name="Hernandez J."/>
            <person name="Rabbinowitsch E."/>
            <person name="Steffen D."/>
            <person name="Sanders M."/>
            <person name="Ma J."/>
            <person name="Kohara Y."/>
            <person name="Sharp S."/>
            <person name="Simmonds M.N."/>
            <person name="Spiegler S."/>
            <person name="Tivey A."/>
            <person name="Sugano S."/>
            <person name="White B."/>
            <person name="Walker D."/>
            <person name="Woodward J.R."/>
            <person name="Winckler T."/>
            <person name="Tanaka Y."/>
            <person name="Shaulsky G."/>
            <person name="Schleicher M."/>
            <person name="Weinstock G.M."/>
            <person name="Rosenthal A."/>
            <person name="Cox E.C."/>
            <person name="Chisholm R.L."/>
            <person name="Gibbs R.A."/>
            <person name="Loomis W.F."/>
            <person name="Platzer M."/>
            <person name="Kay R.R."/>
            <person name="Williams J.G."/>
            <person name="Dear P.H."/>
            <person name="Noegel A.A."/>
            <person name="Barrell B.G."/>
            <person name="Kuspa A."/>
        </authorList>
    </citation>
    <scope>NUCLEOTIDE SEQUENCE [LARGE SCALE GENOMIC DNA]</scope>
    <source>
        <strain>AX4</strain>
    </source>
</reference>
<proteinExistence type="inferred from homology"/>
<sequence length="4241" mass="485001">MVSKILPGLLKKILGNYIEGLDTLSIPWWKGQIVLENLKFKKELFSSNELPFDLLSGVVKRVVITIPILHFLKDPIVVNIDGVFLLFGPKDIINTFSNYGNDKSNKKDIVIDDNDGGISIDSNSNNNNKKNAPSSSSSNDDFFKKPNLTKEELKKIQIQIDKEQSKESNDGYSADSESFKFRMIKKLLKCIRIQLNNLHICYQDDSTSPGEIFSVGITMESFTFQTTDSQWVPLSKNTSTHQQQQPTFNPYVGSQQQQQQQPQQNTEINYENDSEHNPFMNNKNSDEGISSSSSSSSFNNNNLNIPTLNLNDNYMDSEAYTTNTQPTPKSEQYQQQQQQQQPLGQIVDQIITYKLASIFNFSIYWDSQFGKTRMVTPEDMDVLLMHSIPRQKAKINHKYILQPISGFLKICLTEDSIESVNKEGVFNSIANNFNVSIGLKQIDLQLMDIQYRDMLNLLSFYQDWRRVLRYHKFRPHCRVKGNARIWWHFAFRSIISDFRSKKTEMTWKEIEDSKRVRECYIKLYTEKFIKGKLGRLDQNLIDEIEKKVTYEDIVLFRTIAEKDLKVTKRKDLDQFTESSGWWLGGWLGFQHHHQNNNQDKITLTNEQLTFLERYLKVNLKVLAGKPHSSVSLIFFLNVKRLSISILDWQENHTVVPLANIDITEVNLQMEQSHNTKLKFSAESLDIFDRCSPNTKFENIILEKSRFNSSNINPDNSANSIGSFILDRQISNSEFLNGVYTGVNGTNNNNNKKFIDISIVLNPPEDTTDYFIYFKLEPFYFINSKPFVDTMIPFFTHANQEALDRLKYSFIKKIKILQEYLINELKHLVRNQKVADIKLDIAIPGLVFPESYDREDTMVLVCNMGNLILKTQPHNSEWDSMDFSEINEQDETDEIFVRYCNLLKDRVKWWSDNCPIKKINEPIEKQSYIINYVQQHRQTIENLGTGNGINNNNSGGGGNGGNASNSSEDDGKYPEQDDLDDSKVEKEGFDSCDTDWNKVSVNINNAQFYDGIVLTISDIYVKVCDCTQINNFNYLISPFSLDIFLELCSRPYDLKLPQIKCKAELSELNLQVSDKELYEIAKIVGKNGILEYFMDMDRKSSKELADMYEIVQVKKPKKKSFEVQFSLFSDTKSILNSRKRTKERLVKTTLLRFFFTSNAINMKLNYLDSCTLSLTMDQIRCRSLVKFMQMNIQFDISSIEIKDSNSITPVLSIFPYNLNNNNNNNNNNNNNNNNNNNNNNNRNLNNNNNNNNNNQKPECLNEFPISITAKSISKNSLDYDYIDFVLTLTTQYIRINFPKECVMALIAIIGTVVTNTTNFYETKKSILTVEGSFYQGRVGQFTQSNTTTTTSPRYHHQNHHNHQHKKQNRHRLSTRLETNEFDPNDLKSKITINIPSFGLTLSTIENDLVAFQFEDISIDGIFQLPLIDCELKVRDMKFIDYTGSDGPYPYMLITQKSQSPMVPVVRMHLVCHSNSKTQEWGFSRLINIAVGKIQITFLLQTINLIRLFIHDITSSLKEYCPFLFKVMAIVDDNNKPSSKDNNNNNNNNNNSDSDSDSDTDSSSSSENNYNNNIDLNSPVVEIVKKKKNLTNLEIEIDNNVVIVPKNSRSRSAIRFSVGRILLGLDQMDPTVDAVFVKIYGINMASKYEDSIDPIISDPIKMDIRFIHMFETSLKDKSIEVIIKIDKIHLKLSQYQYNLLYNTYQQNINQSIVPAPPSNSYSTVERQDILLDIRLEFKDFVELNLENEKTNDSRFFSMLIQRPIICCSVWNNGDSDFLIKTTGISVRDKNKLVVVPNGFQEMINITPYDLDVPIKNVINQSINEVFFDIVKMNIDDNGIDINITIEYLSIFFDLPWVSKLITFLSPIIDADYIGNSCSNSTNKSSTTINTQLLPPPPPPPPISLNKSGVNLTNQQQNEEFNSKFNKDWKIFLKVEVSAKNANIMVGDLNSKNELVLLMNSSLLINSQFGTEGLMKIILEYQCIKGLIGNKTKDPIYSTKNPSATTMSFISASSRDLGAQKNTTHYLWKELKKSSKLFLETFKTNIQVCLVPEGNQFYFCELNDLSLVFSGKAYKYLLDIYECVSDIIYGVSKSKDITNNNLVQKHSRSSSISTDLPIPINLRRSSIISTNLMQQQQQQQQQQQQQQQQQQQQQQQQQQNNNNNQNNQASSNNNNNNNNNVSGNTINNKSVPNVHDKTKNQFYQIKTRSVEMLRAHQTRVTEKYQASLPSNGKIAETEENENGDHTFTSDDDDDEGEDEDIGEGFSLDHSTSSAPTSRSNYNNINEPMIDLKSSKKQDDSNMVTKIQFSQISISIKNLNIIIMDDLSKHKMNTPIFNMKLNYGFMKAVLKTTRIEVEFDSVFQMNYFNNRIAYWEPFIEPWLFKSMMTLGKELSIDIYSTDLLNINFTIPLMDNISLFLRTYSKEFGYPFNLICAPSDSNNTDNSSNNGKKSHSNRHSLIGQIKKIKEKKTKTSYSPFFIRNRTGSRLRYRLETQDGKPVAGVNHKMEGSTVRVVNIENYGLFFELDSGDCSPIKFLPDVQINLETFSQLVLAVELLGVEKSISIPLDKIKIYDYQVYLDSSTSTKLYANIGIKNGTKLITIQFPIVLKNLTSFPIDIATVTSGFGDTQMPNYSTTIRVGQARAPLPINRMRNVQIKFKPSGDQYKWSTEALDVNNVIEGEDKFSCILKNGEKIYYIKGYIFKKNQCFIIKLCHMLKVKNLLPYPIQFKLKSPIENIPLLKRETQATVQDQEKTEVYEIPLLDKFKIQVRIADKDGTFEKSEWSEIRSIVEREDNNEIGVITISDSNNLIVDYLHLNVEFESYKGEKKIVFYNQYWIFNKSGLNLYCKKSYHSKDYSESQTHFNHPLQQLDSSNTNTTIKPSDAIIVTPDQWYSHQLIKESPLLFSFKKLKDMENSIRIRVGDSKWSHKISIAAIGDRGTIVIDSSEKRHSRSYHLGLSVDLAPNLKTKIVVFTPRFVFHNLFPYTILVQQCGANTDSTTIRIPPSCSVPFYYFINNTGESSKPTLKFKIDYQEFDWSPPFSIQTFSDFTFNVFNNNNNDNVENYKQPDIHCNPYIRIKTCLEVATILVIISELKEPPYRILNNTKYQLSIQQKKVGKVLTVEPSSSIPYVWDLPLEDHILEVLVHISTNQSEKASYKMDKIKTFRPMEFNDDHNPVVIKAIVEADESTRVLTLSDKTSFQISKYEEENLRQSFRIHFTGIGISVINANPTELLYVSIHDILCEYFISSFLQKLEMKITNIQVDNQLSKVTPYSHPVLLFADNLLPNTPFLQVRIVRSMKMKNIDYYHHVSLKMQELNIKVEEKFLYVLLDFFNSLDFSFWTGNKKTNTLHNMDMLTPMYNEDIGEGFIDEMVARALPSIYGKKMYFESLDIEPISMFLTFDLSNKSGSIASLEQAPMVKAFRRIGFVIVSFQHAHIFLHGFSLSHAFGSNEELLAPIFNHYFSEGLSEVYKILGAFNLFGNPVGLVTNFGIGFKEFFVSMGKGLVGNSFTDSFGQGSKSLAKHSVYGIFDSGAKLTGSAGKVLSTLSMDQRYILERQYIIGESPNTFMQGLILGGRAAKTAVYRGFSGFVKLPYEGGKEAGPKGVVKGIGKGTAGLVLKPIAAGFDFASKVSEGIKNSTQLSIERKRIRFPRPLFSDSPLETYDSAESYGHFLFLTYIITAGKLRRISADQINLPLMEVVSKDEKYVSHLIYKNRKTLLFTNKRIIYLYDTDGFRTKFDIKYTRIHGVSEKSDHIDIKIDKKHKLSFLYNEKNKKIDYRIKCVGEEKSYIFYRIIEMIKTYKPFADEELTVNGLKADPTTMIPIPPPPPPPLQQQLLYGSNIIQQQPPIQYFNDGSSSSSNLTGGRTIQPIIFTNDAGPMRNDLNPILENLLAQQPNKNMEIPIWISQGFNPPKPPDTLIPQRFRDPNLINNNNNYYYPNGSGYVYSQPPLYDQYGNQIPPPPPLPSHPLAIDRPTTTTTTNTTTTPYQSSQNIHSTPYPTETPQSVVLKEDISKAIHTPSASSLKKLKTPHHYNVRFEPSSSLGPQDFDIHTIRLQNQQYQHSGSGAPPPPPIITTTTNSTIPPPSSNINQRQLQHQFSSNSIIETPRYKSMARQQQFQQPPPPPPLPSNNRLSLTPSGSGNINYSDKFEVALNTIIQIQKIQSQQMSSLQKNQRDLQKLLFQQQSTEFDTLRNQQEQIQNIISQYHPLSPSKASLVSKLSNELESTNSNVVISPPTGGASN</sequence>
<gene>
    <name type="primary">vps13E</name>
    <name type="ORF">DDB_G0268886</name>
</gene>
<feature type="chain" id="PRO_0000365727" description="Intermembrane lipid transfer protein vps13E">
    <location>
        <begin position="1"/>
        <end position="4241"/>
    </location>
</feature>
<feature type="domain" description="Chorein N-terminal" evidence="2">
    <location>
        <begin position="5"/>
        <end position="97"/>
    </location>
</feature>
<feature type="domain" description="SHR-BD" evidence="2">
    <location>
        <begin position="2825"/>
        <end position="3134"/>
    </location>
</feature>
<feature type="region of interest" description="Disordered" evidence="3">
    <location>
        <begin position="120"/>
        <end position="143"/>
    </location>
</feature>
<feature type="region of interest" description="Disordered" evidence="3">
    <location>
        <begin position="234"/>
        <end position="340"/>
    </location>
</feature>
<feature type="region of interest" description="Disordered" evidence="3">
    <location>
        <begin position="942"/>
        <end position="986"/>
    </location>
</feature>
<feature type="region of interest" description="Disordered" evidence="3">
    <location>
        <begin position="1220"/>
        <end position="1256"/>
    </location>
</feature>
<feature type="region of interest" description="Disordered" evidence="3">
    <location>
        <begin position="1345"/>
        <end position="1369"/>
    </location>
</feature>
<feature type="region of interest" description="Disordered" evidence="3">
    <location>
        <begin position="1534"/>
        <end position="1571"/>
    </location>
</feature>
<feature type="region of interest" description="Disordered" evidence="3">
    <location>
        <begin position="2148"/>
        <end position="2192"/>
    </location>
</feature>
<feature type="region of interest" description="Disordered" evidence="3">
    <location>
        <begin position="2217"/>
        <end position="2282"/>
    </location>
</feature>
<feature type="region of interest" description="Disordered" evidence="3">
    <location>
        <begin position="3973"/>
        <end position="4000"/>
    </location>
</feature>
<feature type="region of interest" description="Disordered" evidence="3">
    <location>
        <begin position="4059"/>
        <end position="4094"/>
    </location>
</feature>
<feature type="region of interest" description="Disordered" evidence="3">
    <location>
        <begin position="4109"/>
        <end position="4140"/>
    </location>
</feature>
<feature type="compositionally biased region" description="Low complexity" evidence="3">
    <location>
        <begin position="120"/>
        <end position="140"/>
    </location>
</feature>
<feature type="compositionally biased region" description="Polar residues" evidence="3">
    <location>
        <begin position="234"/>
        <end position="254"/>
    </location>
</feature>
<feature type="compositionally biased region" description="Low complexity" evidence="3">
    <location>
        <begin position="255"/>
        <end position="264"/>
    </location>
</feature>
<feature type="compositionally biased region" description="Polar residues" evidence="3">
    <location>
        <begin position="279"/>
        <end position="289"/>
    </location>
</feature>
<feature type="compositionally biased region" description="Low complexity" evidence="3">
    <location>
        <begin position="290"/>
        <end position="313"/>
    </location>
</feature>
<feature type="compositionally biased region" description="Low complexity" evidence="3">
    <location>
        <begin position="325"/>
        <end position="340"/>
    </location>
</feature>
<feature type="compositionally biased region" description="Low complexity" evidence="3">
    <location>
        <begin position="942"/>
        <end position="952"/>
    </location>
</feature>
<feature type="compositionally biased region" description="Basic and acidic residues" evidence="3">
    <location>
        <begin position="968"/>
        <end position="986"/>
    </location>
</feature>
<feature type="compositionally biased region" description="Low complexity" evidence="3">
    <location>
        <begin position="1220"/>
        <end position="1253"/>
    </location>
</feature>
<feature type="compositionally biased region" description="Basic residues" evidence="3">
    <location>
        <begin position="1352"/>
        <end position="1369"/>
    </location>
</feature>
<feature type="compositionally biased region" description="Low complexity" evidence="3">
    <location>
        <begin position="1538"/>
        <end position="1551"/>
    </location>
</feature>
<feature type="compositionally biased region" description="Low complexity" evidence="3">
    <location>
        <begin position="1559"/>
        <end position="1571"/>
    </location>
</feature>
<feature type="compositionally biased region" description="Low complexity" evidence="3">
    <location>
        <begin position="2148"/>
        <end position="2177"/>
    </location>
</feature>
<feature type="compositionally biased region" description="Polar residues" evidence="3">
    <location>
        <begin position="2178"/>
        <end position="2188"/>
    </location>
</feature>
<feature type="compositionally biased region" description="Acidic residues" evidence="3">
    <location>
        <begin position="2246"/>
        <end position="2259"/>
    </location>
</feature>
<feature type="compositionally biased region" description="Polar residues" evidence="3">
    <location>
        <begin position="2265"/>
        <end position="2282"/>
    </location>
</feature>
<feature type="compositionally biased region" description="Low complexity" evidence="3">
    <location>
        <begin position="3974"/>
        <end position="3984"/>
    </location>
</feature>
<feature type="compositionally biased region" description="Polar residues" evidence="3">
    <location>
        <begin position="3985"/>
        <end position="4000"/>
    </location>
</feature>
<feature type="compositionally biased region" description="Polar residues" evidence="3">
    <location>
        <begin position="4128"/>
        <end position="4140"/>
    </location>
</feature>
<protein>
    <recommendedName>
        <fullName evidence="4">Intermembrane lipid transfer protein vps13E</fullName>
    </recommendedName>
    <alternativeName>
        <fullName>Vacuolar protein sorting-associated protein 13E</fullName>
    </alternativeName>
</protein>
<comment type="function">
    <text evidence="1">Mediates the transfer of lipids between membranes at organelle contact sites.</text>
</comment>
<comment type="subcellular location">
    <subcellularLocation>
        <location evidence="4">Membrane</location>
        <topology evidence="4">Peripheral membrane protein</topology>
    </subcellularLocation>
</comment>
<comment type="similarity">
    <text evidence="4">Belongs to the VPS13 family.</text>
</comment>